<sequence length="98" mass="10735">SAVYKVKLIGPEGEENEFEVQDDQFILDAAEEAGVDLPYSCRAGACSTCAGQIVKGQVDQSEGSFLEDDHFEKGFVLTCVAYPQSDCVIHTHKETELF</sequence>
<proteinExistence type="evidence at protein level"/>
<protein>
    <recommendedName>
        <fullName>Ferredoxin, root R-B2</fullName>
    </recommendedName>
</protein>
<comment type="function">
    <text>Ferredoxins are iron-sulfur proteins that transfer electrons in a wide variety of metabolic reactions.</text>
</comment>
<comment type="cofactor">
    <cofactor>
        <name>[2Fe-2S] cluster</name>
        <dbReference type="ChEBI" id="CHEBI:190135"/>
    </cofactor>
    <text>Binds 1 [2Fe-2S] cluster.</text>
</comment>
<comment type="subcellular location">
    <subcellularLocation>
        <location>Plastid</location>
        <location>Chloroplast</location>
    </subcellularLocation>
</comment>
<comment type="miscellaneous">
    <text>In radish there are 4 ferredoxins: 2 are root-specific (R-B1 and R-B2), one is present in both leaves and roots (L-A), and there is a minor form which is leaf specific (L-B).</text>
</comment>
<comment type="similarity">
    <text evidence="2">Belongs to the 2Fe2S plant-type ferredoxin family.</text>
</comment>
<evidence type="ECO:0000255" key="1">
    <source>
        <dbReference type="PROSITE-ProRule" id="PRU00465"/>
    </source>
</evidence>
<evidence type="ECO:0000305" key="2"/>
<accession>P14937</accession>
<reference key="1">
    <citation type="journal article" date="1989" name="J. Biochem.">
        <title>Amino acid sequences of ferredoxin isoproteins from radish roots.</title>
        <authorList>
            <person name="Wada K."/>
            <person name="Onda M."/>
            <person name="Matsubara H."/>
        </authorList>
    </citation>
    <scope>PROTEIN SEQUENCE</scope>
    <source>
        <strain>cv. Acantiformis Miyashige</strain>
        <tissue>White-root</tissue>
    </source>
</reference>
<keyword id="KW-0001">2Fe-2S</keyword>
<keyword id="KW-0150">Chloroplast</keyword>
<keyword id="KW-0903">Direct protein sequencing</keyword>
<keyword id="KW-0249">Electron transport</keyword>
<keyword id="KW-0408">Iron</keyword>
<keyword id="KW-0411">Iron-sulfur</keyword>
<keyword id="KW-0479">Metal-binding</keyword>
<keyword id="KW-0934">Plastid</keyword>
<keyword id="KW-1185">Reference proteome</keyword>
<keyword id="KW-0813">Transport</keyword>
<dbReference type="PIR" id="JX0083">
    <property type="entry name" value="JX0083"/>
</dbReference>
<dbReference type="SMR" id="P14937"/>
<dbReference type="Proteomes" id="UP000504610">
    <property type="component" value="Unplaced"/>
</dbReference>
<dbReference type="GO" id="GO:0009507">
    <property type="term" value="C:chloroplast"/>
    <property type="evidence" value="ECO:0007669"/>
    <property type="project" value="UniProtKB-SubCell"/>
</dbReference>
<dbReference type="GO" id="GO:0051537">
    <property type="term" value="F:2 iron, 2 sulfur cluster binding"/>
    <property type="evidence" value="ECO:0007669"/>
    <property type="project" value="UniProtKB-KW"/>
</dbReference>
<dbReference type="GO" id="GO:0009055">
    <property type="term" value="F:electron transfer activity"/>
    <property type="evidence" value="ECO:0007669"/>
    <property type="project" value="InterPro"/>
</dbReference>
<dbReference type="GO" id="GO:0046872">
    <property type="term" value="F:metal ion binding"/>
    <property type="evidence" value="ECO:0007669"/>
    <property type="project" value="UniProtKB-KW"/>
</dbReference>
<dbReference type="GO" id="GO:0022900">
    <property type="term" value="P:electron transport chain"/>
    <property type="evidence" value="ECO:0007669"/>
    <property type="project" value="InterPro"/>
</dbReference>
<dbReference type="CDD" id="cd00207">
    <property type="entry name" value="fer2"/>
    <property type="match status" value="1"/>
</dbReference>
<dbReference type="FunFam" id="3.10.20.30:FF:000014">
    <property type="entry name" value="Ferredoxin"/>
    <property type="match status" value="1"/>
</dbReference>
<dbReference type="Gene3D" id="3.10.20.30">
    <property type="match status" value="1"/>
</dbReference>
<dbReference type="InterPro" id="IPR036010">
    <property type="entry name" value="2Fe-2S_ferredoxin-like_sf"/>
</dbReference>
<dbReference type="InterPro" id="IPR001041">
    <property type="entry name" value="2Fe-2S_ferredoxin-type"/>
</dbReference>
<dbReference type="InterPro" id="IPR006058">
    <property type="entry name" value="2Fe2S_fd_BS"/>
</dbReference>
<dbReference type="InterPro" id="IPR012675">
    <property type="entry name" value="Beta-grasp_dom_sf"/>
</dbReference>
<dbReference type="InterPro" id="IPR010241">
    <property type="entry name" value="Fd_pln"/>
</dbReference>
<dbReference type="NCBIfam" id="TIGR02008">
    <property type="entry name" value="fdx_plant"/>
    <property type="match status" value="1"/>
</dbReference>
<dbReference type="PANTHER" id="PTHR43112">
    <property type="entry name" value="FERREDOXIN"/>
    <property type="match status" value="1"/>
</dbReference>
<dbReference type="PANTHER" id="PTHR43112:SF25">
    <property type="entry name" value="FERREDOXIN"/>
    <property type="match status" value="1"/>
</dbReference>
<dbReference type="Pfam" id="PF00111">
    <property type="entry name" value="Fer2"/>
    <property type="match status" value="1"/>
</dbReference>
<dbReference type="SUPFAM" id="SSF54292">
    <property type="entry name" value="2Fe-2S ferredoxin-like"/>
    <property type="match status" value="1"/>
</dbReference>
<dbReference type="PROSITE" id="PS00197">
    <property type="entry name" value="2FE2S_FER_1"/>
    <property type="match status" value="1"/>
</dbReference>
<dbReference type="PROSITE" id="PS51085">
    <property type="entry name" value="2FE2S_FER_2"/>
    <property type="match status" value="1"/>
</dbReference>
<organism>
    <name type="scientific">Raphanus sativus</name>
    <name type="common">Radish</name>
    <name type="synonym">Raphanus raphanistrum var. sativus</name>
    <dbReference type="NCBI Taxonomy" id="3726"/>
    <lineage>
        <taxon>Eukaryota</taxon>
        <taxon>Viridiplantae</taxon>
        <taxon>Streptophyta</taxon>
        <taxon>Embryophyta</taxon>
        <taxon>Tracheophyta</taxon>
        <taxon>Spermatophyta</taxon>
        <taxon>Magnoliopsida</taxon>
        <taxon>eudicotyledons</taxon>
        <taxon>Gunneridae</taxon>
        <taxon>Pentapetalae</taxon>
        <taxon>rosids</taxon>
        <taxon>malvids</taxon>
        <taxon>Brassicales</taxon>
        <taxon>Brassicaceae</taxon>
        <taxon>Brassiceae</taxon>
        <taxon>Raphanus</taxon>
    </lineage>
</organism>
<name>FER2_RAPSA</name>
<feature type="chain" id="PRO_0000189359" description="Ferredoxin, root R-B2">
    <location>
        <begin position="1"/>
        <end position="98"/>
    </location>
</feature>
<feature type="domain" description="2Fe-2S ferredoxin-type" evidence="1">
    <location>
        <begin position="4"/>
        <end position="95"/>
    </location>
</feature>
<feature type="binding site" evidence="1">
    <location>
        <position position="41"/>
    </location>
    <ligand>
        <name>[2Fe-2S] cluster</name>
        <dbReference type="ChEBI" id="CHEBI:190135"/>
    </ligand>
</feature>
<feature type="binding site" evidence="1">
    <location>
        <position position="46"/>
    </location>
    <ligand>
        <name>[2Fe-2S] cluster</name>
        <dbReference type="ChEBI" id="CHEBI:190135"/>
    </ligand>
</feature>
<feature type="binding site" evidence="1">
    <location>
        <position position="49"/>
    </location>
    <ligand>
        <name>[2Fe-2S] cluster</name>
        <dbReference type="ChEBI" id="CHEBI:190135"/>
    </ligand>
</feature>
<feature type="binding site" evidence="1">
    <location>
        <position position="79"/>
    </location>
    <ligand>
        <name>[2Fe-2S] cluster</name>
        <dbReference type="ChEBI" id="CHEBI:190135"/>
    </ligand>
</feature>